<organism>
    <name type="scientific">Salmonella typhimurium (strain LT2 / SGSC1412 / ATCC 700720)</name>
    <dbReference type="NCBI Taxonomy" id="99287"/>
    <lineage>
        <taxon>Bacteria</taxon>
        <taxon>Pseudomonadati</taxon>
        <taxon>Pseudomonadota</taxon>
        <taxon>Gammaproteobacteria</taxon>
        <taxon>Enterobacterales</taxon>
        <taxon>Enterobacteriaceae</taxon>
        <taxon>Salmonella</taxon>
    </lineage>
</organism>
<keyword id="KW-0378">Hydrolase</keyword>
<keyword id="KW-0479">Metal-binding</keyword>
<keyword id="KW-0482">Metalloprotease</keyword>
<keyword id="KW-0645">Protease</keyword>
<keyword id="KW-1185">Reference proteome</keyword>
<keyword id="KW-0862">Zinc</keyword>
<evidence type="ECO:0000255" key="1">
    <source>
        <dbReference type="HAMAP-Rule" id="MF_00018"/>
    </source>
</evidence>
<evidence type="ECO:0000255" key="2">
    <source>
        <dbReference type="PROSITE-ProRule" id="PRU01182"/>
    </source>
</evidence>
<name>YICR_SALTY</name>
<feature type="chain" id="PRO_0000190725" description="UPF0758 protein YicR">
    <location>
        <begin position="1"/>
        <end position="221"/>
    </location>
</feature>
<feature type="domain" description="MPN" evidence="2">
    <location>
        <begin position="99"/>
        <end position="221"/>
    </location>
</feature>
<feature type="short sequence motif" description="JAMM motif" evidence="2">
    <location>
        <begin position="170"/>
        <end position="183"/>
    </location>
</feature>
<feature type="binding site" evidence="2">
    <location>
        <position position="170"/>
    </location>
    <ligand>
        <name>Zn(2+)</name>
        <dbReference type="ChEBI" id="CHEBI:29105"/>
        <note>catalytic</note>
    </ligand>
</feature>
<feature type="binding site" evidence="2">
    <location>
        <position position="172"/>
    </location>
    <ligand>
        <name>Zn(2+)</name>
        <dbReference type="ChEBI" id="CHEBI:29105"/>
        <note>catalytic</note>
    </ligand>
</feature>
<feature type="binding site" evidence="2">
    <location>
        <position position="183"/>
    </location>
    <ligand>
        <name>Zn(2+)</name>
        <dbReference type="ChEBI" id="CHEBI:29105"/>
        <note>catalytic</note>
    </ligand>
</feature>
<dbReference type="EMBL" id="AE006468">
    <property type="protein sequence ID" value="AAL22588.1"/>
    <property type="molecule type" value="Genomic_DNA"/>
</dbReference>
<dbReference type="SMR" id="P65960"/>
<dbReference type="STRING" id="99287.STM3729"/>
<dbReference type="PaxDb" id="99287-STM3729"/>
<dbReference type="KEGG" id="stm:STM3729"/>
<dbReference type="PATRIC" id="fig|99287.12.peg.3945"/>
<dbReference type="HOGENOM" id="CLU_073529_0_1_6"/>
<dbReference type="PhylomeDB" id="P65960"/>
<dbReference type="BioCyc" id="SENT99287:STM3729-MONOMER"/>
<dbReference type="Proteomes" id="UP000001014">
    <property type="component" value="Chromosome"/>
</dbReference>
<dbReference type="GO" id="GO:0046872">
    <property type="term" value="F:metal ion binding"/>
    <property type="evidence" value="ECO:0007669"/>
    <property type="project" value="UniProtKB-KW"/>
</dbReference>
<dbReference type="GO" id="GO:0008237">
    <property type="term" value="F:metallopeptidase activity"/>
    <property type="evidence" value="ECO:0007669"/>
    <property type="project" value="UniProtKB-KW"/>
</dbReference>
<dbReference type="GO" id="GO:0006508">
    <property type="term" value="P:proteolysis"/>
    <property type="evidence" value="ECO:0007669"/>
    <property type="project" value="UniProtKB-KW"/>
</dbReference>
<dbReference type="CDD" id="cd08071">
    <property type="entry name" value="MPN_DUF2466"/>
    <property type="match status" value="1"/>
</dbReference>
<dbReference type="Gene3D" id="3.40.140.10">
    <property type="entry name" value="Cytidine Deaminase, domain 2"/>
    <property type="match status" value="1"/>
</dbReference>
<dbReference type="HAMAP" id="MF_00018">
    <property type="entry name" value="UPF0758_YicR"/>
    <property type="match status" value="1"/>
</dbReference>
<dbReference type="InterPro" id="IPR037518">
    <property type="entry name" value="MPN"/>
</dbReference>
<dbReference type="InterPro" id="IPR025657">
    <property type="entry name" value="RadC_JAB"/>
</dbReference>
<dbReference type="InterPro" id="IPR010994">
    <property type="entry name" value="RuvA_2-like"/>
</dbReference>
<dbReference type="InterPro" id="IPR001405">
    <property type="entry name" value="UPF0758"/>
</dbReference>
<dbReference type="InterPro" id="IPR020891">
    <property type="entry name" value="UPF0758_CS"/>
</dbReference>
<dbReference type="InterPro" id="IPR046778">
    <property type="entry name" value="UPF0758_N"/>
</dbReference>
<dbReference type="InterPro" id="IPR022820">
    <property type="entry name" value="UPF0758_YicR"/>
</dbReference>
<dbReference type="NCBIfam" id="NF000642">
    <property type="entry name" value="PRK00024.1"/>
    <property type="match status" value="1"/>
</dbReference>
<dbReference type="NCBIfam" id="TIGR00608">
    <property type="entry name" value="radc"/>
    <property type="match status" value="1"/>
</dbReference>
<dbReference type="PANTHER" id="PTHR30471">
    <property type="entry name" value="DNA REPAIR PROTEIN RADC"/>
    <property type="match status" value="1"/>
</dbReference>
<dbReference type="PANTHER" id="PTHR30471:SF3">
    <property type="entry name" value="UPF0758 PROTEIN YEES-RELATED"/>
    <property type="match status" value="1"/>
</dbReference>
<dbReference type="Pfam" id="PF04002">
    <property type="entry name" value="RadC"/>
    <property type="match status" value="1"/>
</dbReference>
<dbReference type="Pfam" id="PF20582">
    <property type="entry name" value="UPF0758_N"/>
    <property type="match status" value="1"/>
</dbReference>
<dbReference type="SUPFAM" id="SSF47781">
    <property type="entry name" value="RuvA domain 2-like"/>
    <property type="match status" value="1"/>
</dbReference>
<dbReference type="PROSITE" id="PS50249">
    <property type="entry name" value="MPN"/>
    <property type="match status" value="1"/>
</dbReference>
<dbReference type="PROSITE" id="PS01302">
    <property type="entry name" value="UPF0758"/>
    <property type="match status" value="1"/>
</dbReference>
<protein>
    <recommendedName>
        <fullName evidence="1">UPF0758 protein YicR</fullName>
    </recommendedName>
</protein>
<gene>
    <name evidence="1" type="primary">yicR</name>
    <name type="ordered locus">STM3729</name>
</gene>
<reference key="1">
    <citation type="journal article" date="2001" name="Nature">
        <title>Complete genome sequence of Salmonella enterica serovar Typhimurium LT2.</title>
        <authorList>
            <person name="McClelland M."/>
            <person name="Sanderson K.E."/>
            <person name="Spieth J."/>
            <person name="Clifton S.W."/>
            <person name="Latreille P."/>
            <person name="Courtney L."/>
            <person name="Porwollik S."/>
            <person name="Ali J."/>
            <person name="Dante M."/>
            <person name="Du F."/>
            <person name="Hou S."/>
            <person name="Layman D."/>
            <person name="Leonard S."/>
            <person name="Nguyen C."/>
            <person name="Scott K."/>
            <person name="Holmes A."/>
            <person name="Grewal N."/>
            <person name="Mulvaney E."/>
            <person name="Ryan E."/>
            <person name="Sun H."/>
            <person name="Florea L."/>
            <person name="Miller W."/>
            <person name="Stoneking T."/>
            <person name="Nhan M."/>
            <person name="Waterston R."/>
            <person name="Wilson R.K."/>
        </authorList>
    </citation>
    <scope>NUCLEOTIDE SEQUENCE [LARGE SCALE GENOMIC DNA]</scope>
    <source>
        <strain>LT2 / SGSC1412 / ATCC 700720</strain>
    </source>
</reference>
<comment type="similarity">
    <text evidence="1">Belongs to the UPF0758 family. YicR subfamily.</text>
</comment>
<accession>P65960</accession>
<accession>Q8XH09</accession>
<proteinExistence type="inferred from homology"/>
<sequence>MDTLDELLPREKMLRSGIASLSDVELLALFLRTGTPGKDVMTLAKEILQHFGSLYGLLSADFAQFRGVNGIGLAKFAQLKGIAELARRYYSVRMNEESALLSPEMTREFLQSQLTGEEREIFLVIFLDAQHRVLQHSRLFSGTLNHVEVHPREIVREAIKLNASAVILAHNHPSGCAEPSKADKLITERVIKCCQFMDIRVLDHLIIGRGEYVSFAERGWI</sequence>